<protein>
    <recommendedName>
        <fullName>Uncharacterized protein aq_1795</fullName>
    </recommendedName>
</protein>
<dbReference type="EMBL" id="AE000657">
    <property type="protein sequence ID" value="AAC07626.1"/>
    <property type="molecule type" value="Genomic_DNA"/>
</dbReference>
<dbReference type="PIR" id="F70454">
    <property type="entry name" value="F70454"/>
</dbReference>
<dbReference type="RefSeq" id="NP_214230.1">
    <property type="nucleotide sequence ID" value="NC_000918.1"/>
</dbReference>
<dbReference type="RefSeq" id="WP_010881167.1">
    <property type="nucleotide sequence ID" value="NC_000918.1"/>
</dbReference>
<dbReference type="SMR" id="O67664"/>
<dbReference type="STRING" id="224324.aq_1795"/>
<dbReference type="EnsemblBacteria" id="AAC07626">
    <property type="protein sequence ID" value="AAC07626"/>
    <property type="gene ID" value="aq_1795"/>
</dbReference>
<dbReference type="KEGG" id="aae:aq_1795"/>
<dbReference type="eggNOG" id="COG0457">
    <property type="taxonomic scope" value="Bacteria"/>
</dbReference>
<dbReference type="HOGENOM" id="CLU_1493249_0_0_0"/>
<dbReference type="InParanoid" id="O67664"/>
<dbReference type="Proteomes" id="UP000000798">
    <property type="component" value="Chromosome"/>
</dbReference>
<accession>O67664</accession>
<keyword id="KW-1185">Reference proteome</keyword>
<feature type="chain" id="PRO_0000186946" description="Uncharacterized protein aq_1795">
    <location>
        <begin position="1"/>
        <end position="180"/>
    </location>
</feature>
<name>Y1795_AQUAE</name>
<reference key="1">
    <citation type="journal article" date="1998" name="Nature">
        <title>The complete genome of the hyperthermophilic bacterium Aquifex aeolicus.</title>
        <authorList>
            <person name="Deckert G."/>
            <person name="Warren P.V."/>
            <person name="Gaasterland T."/>
            <person name="Young W.G."/>
            <person name="Lenox A.L."/>
            <person name="Graham D.E."/>
            <person name="Overbeek R."/>
            <person name="Snead M.A."/>
            <person name="Keller M."/>
            <person name="Aujay M."/>
            <person name="Huber R."/>
            <person name="Feldman R.A."/>
            <person name="Short J.M."/>
            <person name="Olsen G.J."/>
            <person name="Swanson R.V."/>
        </authorList>
    </citation>
    <scope>NUCLEOTIDE SEQUENCE [LARGE SCALE GENOMIC DNA]</scope>
    <source>
        <strain>VF5</strain>
    </source>
</reference>
<proteinExistence type="predicted"/>
<gene>
    <name type="ordered locus">aq_1795</name>
</gene>
<organism>
    <name type="scientific">Aquifex aeolicus (strain VF5)</name>
    <dbReference type="NCBI Taxonomy" id="224324"/>
    <lineage>
        <taxon>Bacteria</taxon>
        <taxon>Pseudomonadati</taxon>
        <taxon>Aquificota</taxon>
        <taxon>Aquificia</taxon>
        <taxon>Aquificales</taxon>
        <taxon>Aquificaceae</taxon>
        <taxon>Aquifex</taxon>
    </lineage>
</organism>
<sequence length="180" mass="22210">MREVITLLFALVSFIHGSISEKYELYREFLETKNVKLAEKILRKYPNAPFKNELYIFLIEKYYRTNPRKAKIFIKKLNVKRIPYYKVKEFVKIYKKLGLNLKPFVVQYPEFFLKDLRKFKLSQEEREKIAKRLYRLRKYRYVLKLTKDCYLKGKTYYRLEKYKIAERILKNCPKKEPKSF</sequence>